<keyword id="KW-0238">DNA-binding</keyword>
<keyword id="KW-0371">Homeobox</keyword>
<keyword id="KW-0539">Nucleus</keyword>
<keyword id="KW-1185">Reference proteome</keyword>
<keyword id="KW-0804">Transcription</keyword>
<keyword id="KW-0805">Transcription regulation</keyword>
<reference evidence="5" key="1">
    <citation type="journal article" date="2005" name="Genome Res.">
        <title>Comparative genome sequencing of Drosophila pseudoobscura: chromosomal, gene, and cis-element evolution.</title>
        <authorList>
            <person name="Richards S."/>
            <person name="Liu Y."/>
            <person name="Bettencourt B.R."/>
            <person name="Hradecky P."/>
            <person name="Letovsky S."/>
            <person name="Nielsen R."/>
            <person name="Thornton K."/>
            <person name="Hubisz M.J."/>
            <person name="Chen R."/>
            <person name="Meisel R.P."/>
            <person name="Couronne O."/>
            <person name="Hua S."/>
            <person name="Smith M.A."/>
            <person name="Zhang P."/>
            <person name="Liu J."/>
            <person name="Bussemaker H.J."/>
            <person name="van Batenburg M.F."/>
            <person name="Howells S.L."/>
            <person name="Scherer S.E."/>
            <person name="Sodergren E."/>
            <person name="Matthews B.B."/>
            <person name="Crosby M.A."/>
            <person name="Schroeder A.J."/>
            <person name="Ortiz-Barrientos D."/>
            <person name="Rives C.M."/>
            <person name="Metzker M.L."/>
            <person name="Muzny D.M."/>
            <person name="Scott G."/>
            <person name="Steffen D."/>
            <person name="Wheeler D.A."/>
            <person name="Worley K.C."/>
            <person name="Havlak P."/>
            <person name="Durbin K.J."/>
            <person name="Egan A."/>
            <person name="Gill R."/>
            <person name="Hume J."/>
            <person name="Morgan M.B."/>
            <person name="Miner G."/>
            <person name="Hamilton C."/>
            <person name="Huang Y."/>
            <person name="Waldron L."/>
            <person name="Verduzco D."/>
            <person name="Clerc-Blankenburg K.P."/>
            <person name="Dubchak I."/>
            <person name="Noor M.A.F."/>
            <person name="Anderson W."/>
            <person name="White K.P."/>
            <person name="Clark A.G."/>
            <person name="Schaeffer S.W."/>
            <person name="Gelbart W.M."/>
            <person name="Weinstock G.M."/>
            <person name="Gibbs R.A."/>
        </authorList>
    </citation>
    <scope>NUCLEOTIDE SEQUENCE [LARGE SCALE GENOMIC DNA]</scope>
    <source>
        <strain>MV2-25 / Tucson 14011-0121.94</strain>
    </source>
</reference>
<organism>
    <name type="scientific">Drosophila pseudoobscura pseudoobscura</name>
    <name type="common">Fruit fly</name>
    <dbReference type="NCBI Taxonomy" id="46245"/>
    <lineage>
        <taxon>Eukaryota</taxon>
        <taxon>Metazoa</taxon>
        <taxon>Ecdysozoa</taxon>
        <taxon>Arthropoda</taxon>
        <taxon>Hexapoda</taxon>
        <taxon>Insecta</taxon>
        <taxon>Pterygota</taxon>
        <taxon>Neoptera</taxon>
        <taxon>Endopterygota</taxon>
        <taxon>Diptera</taxon>
        <taxon>Brachycera</taxon>
        <taxon>Muscomorpha</taxon>
        <taxon>Ephydroidea</taxon>
        <taxon>Drosophilidae</taxon>
        <taxon>Drosophila</taxon>
        <taxon>Sophophora</taxon>
    </lineage>
</organism>
<dbReference type="EMBL" id="CM000071">
    <property type="protein sequence ID" value="EAL25705.1"/>
    <property type="status" value="ALT_SEQ"/>
    <property type="molecule type" value="Genomic_DNA"/>
</dbReference>
<dbReference type="RefSeq" id="XP_001361128.1">
    <property type="nucleotide sequence ID" value="XM_001361091.2"/>
</dbReference>
<dbReference type="SMR" id="Q28ZA9"/>
<dbReference type="FunCoup" id="Q28ZA9">
    <property type="interactions" value="75"/>
</dbReference>
<dbReference type="STRING" id="46245.Q28ZA9"/>
<dbReference type="EnsemblMetazoa" id="FBtr0277977">
    <property type="protein sequence ID" value="FBpp0276415"/>
    <property type="gene ID" value="FBgn0074104"/>
</dbReference>
<dbReference type="GeneID" id="4804593"/>
<dbReference type="KEGG" id="dpo:4804593"/>
<dbReference type="CTD" id="35942"/>
<dbReference type="eggNOG" id="KOG0489">
    <property type="taxonomic scope" value="Eukaryota"/>
</dbReference>
<dbReference type="HOGENOM" id="CLU_571441_0_0_1"/>
<dbReference type="InParanoid" id="Q28ZA9"/>
<dbReference type="OMA" id="MSPRNYN"/>
<dbReference type="PhylomeDB" id="Q28ZA9"/>
<dbReference type="Proteomes" id="UP000001819">
    <property type="component" value="Chromosome 3"/>
</dbReference>
<dbReference type="Bgee" id="FBgn0074104">
    <property type="expression patterns" value="Expressed in adult organism"/>
</dbReference>
<dbReference type="GO" id="GO:0005634">
    <property type="term" value="C:nucleus"/>
    <property type="evidence" value="ECO:0000250"/>
    <property type="project" value="UniProtKB"/>
</dbReference>
<dbReference type="GO" id="GO:0003700">
    <property type="term" value="F:DNA-binding transcription factor activity"/>
    <property type="evidence" value="ECO:0000250"/>
    <property type="project" value="UniProtKB"/>
</dbReference>
<dbReference type="GO" id="GO:0000981">
    <property type="term" value="F:DNA-binding transcription factor activity, RNA polymerase II-specific"/>
    <property type="evidence" value="ECO:0007669"/>
    <property type="project" value="InterPro"/>
</dbReference>
<dbReference type="GO" id="GO:0000977">
    <property type="term" value="F:RNA polymerase II transcription regulatory region sequence-specific DNA binding"/>
    <property type="evidence" value="ECO:0007669"/>
    <property type="project" value="TreeGrafter"/>
</dbReference>
<dbReference type="GO" id="GO:0007420">
    <property type="term" value="P:brain development"/>
    <property type="evidence" value="ECO:0000250"/>
    <property type="project" value="UniProtKB"/>
</dbReference>
<dbReference type="GO" id="GO:0006355">
    <property type="term" value="P:regulation of DNA-templated transcription"/>
    <property type="evidence" value="ECO:0000250"/>
    <property type="project" value="UniProtKB"/>
</dbReference>
<dbReference type="GO" id="GO:0051960">
    <property type="term" value="P:regulation of nervous system development"/>
    <property type="evidence" value="ECO:0000250"/>
    <property type="project" value="UniProtKB"/>
</dbReference>
<dbReference type="CDD" id="cd00086">
    <property type="entry name" value="homeodomain"/>
    <property type="match status" value="1"/>
</dbReference>
<dbReference type="FunFam" id="1.10.10.60:FF:000360">
    <property type="entry name" value="Gastrulation brain homeobox"/>
    <property type="match status" value="1"/>
</dbReference>
<dbReference type="Gene3D" id="1.10.10.60">
    <property type="entry name" value="Homeodomain-like"/>
    <property type="match status" value="1"/>
</dbReference>
<dbReference type="InterPro" id="IPR042982">
    <property type="entry name" value="GBX-1/2"/>
</dbReference>
<dbReference type="InterPro" id="IPR001356">
    <property type="entry name" value="HD"/>
</dbReference>
<dbReference type="InterPro" id="IPR020479">
    <property type="entry name" value="HD_metazoa"/>
</dbReference>
<dbReference type="InterPro" id="IPR017970">
    <property type="entry name" value="Homeobox_CS"/>
</dbReference>
<dbReference type="InterPro" id="IPR009057">
    <property type="entry name" value="Homeodomain-like_sf"/>
</dbReference>
<dbReference type="PANTHER" id="PTHR24334">
    <property type="entry name" value="HOMEOBOX PROTEIN GBX"/>
    <property type="match status" value="1"/>
</dbReference>
<dbReference type="PANTHER" id="PTHR24334:SF0">
    <property type="entry name" value="HOMEOBOX PROTEIN UNPLUGGED"/>
    <property type="match status" value="1"/>
</dbReference>
<dbReference type="Pfam" id="PF00046">
    <property type="entry name" value="Homeodomain"/>
    <property type="match status" value="1"/>
</dbReference>
<dbReference type="PRINTS" id="PR00024">
    <property type="entry name" value="HOMEOBOX"/>
</dbReference>
<dbReference type="SMART" id="SM00389">
    <property type="entry name" value="HOX"/>
    <property type="match status" value="1"/>
</dbReference>
<dbReference type="SUPFAM" id="SSF46689">
    <property type="entry name" value="Homeodomain-like"/>
    <property type="match status" value="1"/>
</dbReference>
<dbReference type="PROSITE" id="PS00027">
    <property type="entry name" value="HOMEOBOX_1"/>
    <property type="match status" value="1"/>
</dbReference>
<dbReference type="PROSITE" id="PS50071">
    <property type="entry name" value="HOMEOBOX_2"/>
    <property type="match status" value="1"/>
</dbReference>
<proteinExistence type="inferred from homology"/>
<name>UNPG_DROPS</name>
<evidence type="ECO:0000250" key="1">
    <source>
        <dbReference type="UniProtKB" id="Q4V5A3"/>
    </source>
</evidence>
<evidence type="ECO:0000255" key="2">
    <source>
        <dbReference type="PROSITE-ProRule" id="PRU00108"/>
    </source>
</evidence>
<evidence type="ECO:0000256" key="3">
    <source>
        <dbReference type="SAM" id="MobiDB-lite"/>
    </source>
</evidence>
<evidence type="ECO:0000305" key="4"/>
<evidence type="ECO:0000312" key="5">
    <source>
        <dbReference type="EMBL" id="EAL25705.1"/>
    </source>
</evidence>
<feature type="chain" id="PRO_0000299500" description="Homeobox protein unplugged">
    <location>
        <begin position="1"/>
        <end position="491"/>
    </location>
</feature>
<feature type="DNA-binding region" description="Homeobox" evidence="2">
    <location>
        <begin position="323"/>
        <end position="382"/>
    </location>
</feature>
<feature type="region of interest" description="Disordered" evidence="3">
    <location>
        <begin position="1"/>
        <end position="23"/>
    </location>
</feature>
<feature type="region of interest" description="Disordered" evidence="3">
    <location>
        <begin position="46"/>
        <end position="69"/>
    </location>
</feature>
<feature type="region of interest" description="Disordered" evidence="3">
    <location>
        <begin position="124"/>
        <end position="146"/>
    </location>
</feature>
<feature type="region of interest" description="Disordered" evidence="3">
    <location>
        <begin position="227"/>
        <end position="329"/>
    </location>
</feature>
<feature type="compositionally biased region" description="Polar residues" evidence="3">
    <location>
        <begin position="254"/>
        <end position="264"/>
    </location>
</feature>
<feature type="compositionally biased region" description="Gly residues" evidence="3">
    <location>
        <begin position="305"/>
        <end position="316"/>
    </location>
</feature>
<gene>
    <name evidence="1" type="primary">unpg</name>
    <name type="ORF">GA14073</name>
</gene>
<sequence length="491" mass="52534">MERPALLQNGEHGAVGSLETKTTTRLMPKPFSIESLIATQTPATVSASASIAASPPSPPEDHEQEQEQELSARAMVASSALGLTQFPLYNPWLHGYFAQNHERLTHLIAGGGCYLGSPVGNPFAGKEPSHPHPPPPHALDKSPLPHPLDTRFLPFNASAAAAAASAATPTDLSYRRLAELMNQDYVHNLSVNARLQHMAVAGRLQEDHPSHSLMHLQEPMLLQANPFSPAKSVSHSPVEPTLDVGVDEDYECSGDSSSDISLTLSPMPRNCNRELDKSRNGAYTNSDSEDCSDDEGAHSHHDASGLGGKDSQGNGSGSSSSKSRRRRTAFTSEQLLELEREFHAKKYLSLTERSQIATSLKLSEVQVKIWFQNRRAKWKRVKAGLTSHGLGRNGSASGTKIVVPIPVHVNRFAVRSQHQQLEKMCLSGPKPDLRKKLSTEAMSGFEKFNGGGLGGSAPSSSTASVGAGSVGMGLALGIGVTTPLSLGRSIY</sequence>
<comment type="function">
    <text evidence="1">Plays a regulatory role in neural branching of the tracheae: segment-specific aspects of these neural branching patterns appear to be generated by homeotic regulation of expression.</text>
</comment>
<comment type="subcellular location">
    <subcellularLocation>
        <location evidence="1 2">Nucleus</location>
    </subcellularLocation>
</comment>
<comment type="sequence caution" evidence="4">
    <conflict type="erroneous gene model prediction">
        <sequence resource="EMBL-CDS" id="EAL25705"/>
    </conflict>
</comment>
<accession>Q28ZA9</accession>
<protein>
    <recommendedName>
        <fullName>Homeobox protein unplugged</fullName>
    </recommendedName>
</protein>